<protein>
    <recommendedName>
        <fullName evidence="1">Asparagine--tRNA ligase</fullName>
        <ecNumber evidence="1">6.1.1.22</ecNumber>
    </recommendedName>
    <alternativeName>
        <fullName evidence="1">Asparaginyl-tRNA synthetase</fullName>
        <shortName evidence="1">AsnRS</shortName>
    </alternativeName>
</protein>
<reference key="1">
    <citation type="journal article" date="2002" name="Nucleic Acids Res.">
        <title>The complete genomic sequence of Mycoplasma penetrans, an intracellular bacterial pathogen in humans.</title>
        <authorList>
            <person name="Sasaki Y."/>
            <person name="Ishikawa J."/>
            <person name="Yamashita A."/>
            <person name="Oshima K."/>
            <person name="Kenri T."/>
            <person name="Furuya K."/>
            <person name="Yoshino C."/>
            <person name="Horino A."/>
            <person name="Shiba T."/>
            <person name="Sasaki T."/>
            <person name="Hattori M."/>
        </authorList>
    </citation>
    <scope>NUCLEOTIDE SEQUENCE [LARGE SCALE GENOMIC DNA]</scope>
    <source>
        <strain>HF-2</strain>
    </source>
</reference>
<proteinExistence type="inferred from homology"/>
<accession>Q8EW03</accession>
<gene>
    <name evidence="1" type="primary">asnS</name>
    <name type="ordered locus">MYPE4040</name>
</gene>
<keyword id="KW-0030">Aminoacyl-tRNA synthetase</keyword>
<keyword id="KW-0067">ATP-binding</keyword>
<keyword id="KW-0963">Cytoplasm</keyword>
<keyword id="KW-0436">Ligase</keyword>
<keyword id="KW-0547">Nucleotide-binding</keyword>
<keyword id="KW-0648">Protein biosynthesis</keyword>
<keyword id="KW-1185">Reference proteome</keyword>
<evidence type="ECO:0000255" key="1">
    <source>
        <dbReference type="HAMAP-Rule" id="MF_00534"/>
    </source>
</evidence>
<feature type="chain" id="PRO_0000176432" description="Asparagine--tRNA ligase">
    <location>
        <begin position="1"/>
        <end position="453"/>
    </location>
</feature>
<sequence length="453" mass="52087">METVAVRDIFKNYKEFSNVKLVGWVRSNRDNGSIGFISFTDGSCIHSIQLVYKNGETNNFEEAKSTRTGSAILVEGVVVESKQPNQSFEIKVTNFILLKQADEDYPLQKKEHGAEFLRTIAHLRQRTNKYGTIMRLRSELAFAIHNFFHQNNFVWVSSPIITSNDAEGAGENFYVDSKTVKNFFGKNASLTVSGQMHAEAYAQSYKRVYTFGPTFRAEKSNTNRHVSEFWMVEPEIAFCNLEQLMYLIEEFVKYLIRFILKNCKDEMTFLNKLSNNTLSEKLLNAISHPFEKITYKKAIAILKSDVANKKVKFENESIYFGMDLNSEHEKYLCEKVFNKPLFIYDYPAEIKAFYMKMNADGTTVGACDLLMPGIGEIVGGSERESDYTKLVKKCTKANMKVEDIEWYLALRKYGYHKSAGFGLGFERFLMYVTECENVKDTIPFPRSYGSLDF</sequence>
<dbReference type="EC" id="6.1.1.22" evidence="1"/>
<dbReference type="EMBL" id="BA000026">
    <property type="protein sequence ID" value="BAC44194.1"/>
    <property type="molecule type" value="Genomic_DNA"/>
</dbReference>
<dbReference type="RefSeq" id="WP_011077230.1">
    <property type="nucleotide sequence ID" value="NC_004432.1"/>
</dbReference>
<dbReference type="SMR" id="Q8EW03"/>
<dbReference type="FunCoup" id="Q8EW03">
    <property type="interactions" value="214"/>
</dbReference>
<dbReference type="STRING" id="272633.gene:10731520"/>
<dbReference type="KEGG" id="mpe:MYPE4040"/>
<dbReference type="eggNOG" id="COG0017">
    <property type="taxonomic scope" value="Bacteria"/>
</dbReference>
<dbReference type="HOGENOM" id="CLU_004553_2_0_14"/>
<dbReference type="InParanoid" id="Q8EW03"/>
<dbReference type="Proteomes" id="UP000002522">
    <property type="component" value="Chromosome"/>
</dbReference>
<dbReference type="GO" id="GO:0005737">
    <property type="term" value="C:cytoplasm"/>
    <property type="evidence" value="ECO:0007669"/>
    <property type="project" value="UniProtKB-SubCell"/>
</dbReference>
<dbReference type="GO" id="GO:0004816">
    <property type="term" value="F:asparagine-tRNA ligase activity"/>
    <property type="evidence" value="ECO:0007669"/>
    <property type="project" value="UniProtKB-UniRule"/>
</dbReference>
<dbReference type="GO" id="GO:0005524">
    <property type="term" value="F:ATP binding"/>
    <property type="evidence" value="ECO:0007669"/>
    <property type="project" value="UniProtKB-UniRule"/>
</dbReference>
<dbReference type="GO" id="GO:0003676">
    <property type="term" value="F:nucleic acid binding"/>
    <property type="evidence" value="ECO:0007669"/>
    <property type="project" value="InterPro"/>
</dbReference>
<dbReference type="GO" id="GO:0006421">
    <property type="term" value="P:asparaginyl-tRNA aminoacylation"/>
    <property type="evidence" value="ECO:0007669"/>
    <property type="project" value="UniProtKB-UniRule"/>
</dbReference>
<dbReference type="CDD" id="cd00776">
    <property type="entry name" value="AsxRS_core"/>
    <property type="match status" value="1"/>
</dbReference>
<dbReference type="CDD" id="cd04318">
    <property type="entry name" value="EcAsnRS_like_N"/>
    <property type="match status" value="1"/>
</dbReference>
<dbReference type="FunFam" id="3.30.930.10:FF:000016">
    <property type="entry name" value="Asparagine--tRNA ligase"/>
    <property type="match status" value="1"/>
</dbReference>
<dbReference type="Gene3D" id="3.30.930.10">
    <property type="entry name" value="Bira Bifunctional Protein, Domain 2"/>
    <property type="match status" value="1"/>
</dbReference>
<dbReference type="Gene3D" id="2.40.50.140">
    <property type="entry name" value="Nucleic acid-binding proteins"/>
    <property type="match status" value="1"/>
</dbReference>
<dbReference type="HAMAP" id="MF_00534">
    <property type="entry name" value="Asn_tRNA_synth"/>
    <property type="match status" value="1"/>
</dbReference>
<dbReference type="InterPro" id="IPR004364">
    <property type="entry name" value="Aa-tRNA-synt_II"/>
</dbReference>
<dbReference type="InterPro" id="IPR006195">
    <property type="entry name" value="aa-tRNA-synth_II"/>
</dbReference>
<dbReference type="InterPro" id="IPR045864">
    <property type="entry name" value="aa-tRNA-synth_II/BPL/LPL"/>
</dbReference>
<dbReference type="InterPro" id="IPR004522">
    <property type="entry name" value="Asn-tRNA-ligase"/>
</dbReference>
<dbReference type="InterPro" id="IPR002312">
    <property type="entry name" value="Asp/Asn-tRNA-synth_IIb"/>
</dbReference>
<dbReference type="InterPro" id="IPR012340">
    <property type="entry name" value="NA-bd_OB-fold"/>
</dbReference>
<dbReference type="InterPro" id="IPR004365">
    <property type="entry name" value="NA-bd_OB_tRNA"/>
</dbReference>
<dbReference type="NCBIfam" id="TIGR00457">
    <property type="entry name" value="asnS"/>
    <property type="match status" value="1"/>
</dbReference>
<dbReference type="NCBIfam" id="NF003037">
    <property type="entry name" value="PRK03932.1"/>
    <property type="match status" value="1"/>
</dbReference>
<dbReference type="PANTHER" id="PTHR22594:SF34">
    <property type="entry name" value="ASPARAGINE--TRNA LIGASE, MITOCHONDRIAL-RELATED"/>
    <property type="match status" value="1"/>
</dbReference>
<dbReference type="PANTHER" id="PTHR22594">
    <property type="entry name" value="ASPARTYL/LYSYL-TRNA SYNTHETASE"/>
    <property type="match status" value="1"/>
</dbReference>
<dbReference type="Pfam" id="PF00152">
    <property type="entry name" value="tRNA-synt_2"/>
    <property type="match status" value="1"/>
</dbReference>
<dbReference type="Pfam" id="PF01336">
    <property type="entry name" value="tRNA_anti-codon"/>
    <property type="match status" value="1"/>
</dbReference>
<dbReference type="PRINTS" id="PR01042">
    <property type="entry name" value="TRNASYNTHASP"/>
</dbReference>
<dbReference type="SUPFAM" id="SSF55681">
    <property type="entry name" value="Class II aaRS and biotin synthetases"/>
    <property type="match status" value="1"/>
</dbReference>
<dbReference type="SUPFAM" id="SSF50249">
    <property type="entry name" value="Nucleic acid-binding proteins"/>
    <property type="match status" value="1"/>
</dbReference>
<dbReference type="PROSITE" id="PS50862">
    <property type="entry name" value="AA_TRNA_LIGASE_II"/>
    <property type="match status" value="1"/>
</dbReference>
<organism>
    <name type="scientific">Malacoplasma penetrans (strain HF-2)</name>
    <name type="common">Mycoplasma penetrans</name>
    <dbReference type="NCBI Taxonomy" id="272633"/>
    <lineage>
        <taxon>Bacteria</taxon>
        <taxon>Bacillati</taxon>
        <taxon>Mycoplasmatota</taxon>
        <taxon>Mycoplasmoidales</taxon>
        <taxon>Mycoplasmoidaceae</taxon>
        <taxon>Malacoplasma</taxon>
    </lineage>
</organism>
<name>SYN_MALP2</name>
<comment type="catalytic activity">
    <reaction evidence="1">
        <text>tRNA(Asn) + L-asparagine + ATP = L-asparaginyl-tRNA(Asn) + AMP + diphosphate + H(+)</text>
        <dbReference type="Rhea" id="RHEA:11180"/>
        <dbReference type="Rhea" id="RHEA-COMP:9659"/>
        <dbReference type="Rhea" id="RHEA-COMP:9674"/>
        <dbReference type="ChEBI" id="CHEBI:15378"/>
        <dbReference type="ChEBI" id="CHEBI:30616"/>
        <dbReference type="ChEBI" id="CHEBI:33019"/>
        <dbReference type="ChEBI" id="CHEBI:58048"/>
        <dbReference type="ChEBI" id="CHEBI:78442"/>
        <dbReference type="ChEBI" id="CHEBI:78515"/>
        <dbReference type="ChEBI" id="CHEBI:456215"/>
        <dbReference type="EC" id="6.1.1.22"/>
    </reaction>
</comment>
<comment type="subunit">
    <text evidence="1">Homodimer.</text>
</comment>
<comment type="subcellular location">
    <subcellularLocation>
        <location evidence="1">Cytoplasm</location>
    </subcellularLocation>
</comment>
<comment type="similarity">
    <text evidence="1">Belongs to the class-II aminoacyl-tRNA synthetase family.</text>
</comment>